<sequence length="136" mass="15885">MLFSLLELVQWLGFAQLEIFLHISALLVFTVLLALKADGFAPSMSWWNVFIPFFTADGLSTYFTTIVTVRLFQDGEKRQAVLRLFWILTILSLKFIFEMLLCQKLVEQSRELWYGLIMSPIFILLQLLMIRACRVN</sequence>
<dbReference type="EMBL" id="BC073376">
    <property type="protein sequence ID" value="AAH73376.1"/>
    <property type="molecule type" value="mRNA"/>
</dbReference>
<dbReference type="RefSeq" id="NP_001085810.1">
    <property type="nucleotide sequence ID" value="NM_001092341.1"/>
</dbReference>
<dbReference type="RefSeq" id="XP_018087480.1">
    <property type="nucleotide sequence ID" value="XM_018231991.1"/>
</dbReference>
<dbReference type="RefSeq" id="XP_018087481.1">
    <property type="nucleotide sequence ID" value="XM_018231992.1"/>
</dbReference>
<dbReference type="DNASU" id="444237"/>
<dbReference type="GeneID" id="444237"/>
<dbReference type="KEGG" id="xla:444237"/>
<dbReference type="AGR" id="Xenbase:XB-GENE-6255697"/>
<dbReference type="CTD" id="444237"/>
<dbReference type="Xenbase" id="XB-GENE-6255697">
    <property type="gene designation" value="tmem203.S"/>
</dbReference>
<dbReference type="OMA" id="LNTYFCA"/>
<dbReference type="OrthoDB" id="6234541at2759"/>
<dbReference type="Proteomes" id="UP000186698">
    <property type="component" value="Chromosome 8S"/>
</dbReference>
<dbReference type="Bgee" id="444237">
    <property type="expression patterns" value="Expressed in oocyte and 19 other cell types or tissues"/>
</dbReference>
<dbReference type="GO" id="GO:0005783">
    <property type="term" value="C:endoplasmic reticulum"/>
    <property type="evidence" value="ECO:0000250"/>
    <property type="project" value="UniProtKB"/>
</dbReference>
<dbReference type="GO" id="GO:0005789">
    <property type="term" value="C:endoplasmic reticulum membrane"/>
    <property type="evidence" value="ECO:0007669"/>
    <property type="project" value="UniProtKB-SubCell"/>
</dbReference>
<dbReference type="GO" id="GO:0005793">
    <property type="term" value="C:endoplasmic reticulum-Golgi intermediate compartment"/>
    <property type="evidence" value="ECO:0007669"/>
    <property type="project" value="UniProtKB-SubCell"/>
</dbReference>
<dbReference type="GO" id="GO:0006874">
    <property type="term" value="P:intracellular calcium ion homeostasis"/>
    <property type="evidence" value="ECO:0000318"/>
    <property type="project" value="GO_Central"/>
</dbReference>
<dbReference type="CDD" id="cd22816">
    <property type="entry name" value="TMEM203"/>
    <property type="match status" value="1"/>
</dbReference>
<dbReference type="InterPro" id="IPR019396">
    <property type="entry name" value="TM_Fragile-X-F-assoc"/>
</dbReference>
<dbReference type="PANTHER" id="PTHR13568">
    <property type="entry name" value="FAM11A, B PROTEIN"/>
    <property type="match status" value="1"/>
</dbReference>
<dbReference type="PANTHER" id="PTHR13568:SF9">
    <property type="entry name" value="TRANSMEMBRANE PROTEIN 203"/>
    <property type="match status" value="1"/>
</dbReference>
<dbReference type="Pfam" id="PF10269">
    <property type="entry name" value="Tmemb_185A"/>
    <property type="match status" value="1"/>
</dbReference>
<comment type="function">
    <text evidence="1 2">Involved in the regulation of cellular calcium homeotasis. May act as a regulator of STING-mediated inflammatory signaling in macrophages.</text>
</comment>
<comment type="subcellular location">
    <subcellularLocation>
        <location evidence="2">Endoplasmic reticulum membrane</location>
        <topology evidence="3">Multi-pass membrane protein</topology>
    </subcellularLocation>
    <subcellularLocation>
        <location evidence="1">Endoplasmic reticulum-Golgi intermediate compartment</location>
    </subcellularLocation>
</comment>
<protein>
    <recommendedName>
        <fullName>Transmembrane protein 203</fullName>
    </recommendedName>
</protein>
<feature type="chain" id="PRO_0000317205" description="Transmembrane protein 203">
    <location>
        <begin position="1"/>
        <end position="136"/>
    </location>
</feature>
<feature type="transmembrane region" description="Helical" evidence="3">
    <location>
        <begin position="14"/>
        <end position="34"/>
    </location>
</feature>
<feature type="transmembrane region" description="Helical" evidence="3">
    <location>
        <begin position="50"/>
        <end position="72"/>
    </location>
</feature>
<feature type="transmembrane region" description="Helical" evidence="3">
    <location>
        <begin position="81"/>
        <end position="101"/>
    </location>
</feature>
<feature type="transmembrane region" description="Helical" evidence="3">
    <location>
        <begin position="112"/>
        <end position="132"/>
    </location>
</feature>
<accession>Q6GNX5</accession>
<evidence type="ECO:0000250" key="1">
    <source>
        <dbReference type="UniProtKB" id="Q8R235"/>
    </source>
</evidence>
<evidence type="ECO:0000250" key="2">
    <source>
        <dbReference type="UniProtKB" id="Q969S6"/>
    </source>
</evidence>
<evidence type="ECO:0000255" key="3"/>
<reference key="1">
    <citation type="submission" date="2004-06" db="EMBL/GenBank/DDBJ databases">
        <authorList>
            <consortium name="NIH - Xenopus Gene Collection (XGC) project"/>
        </authorList>
    </citation>
    <scope>NUCLEOTIDE SEQUENCE [LARGE SCALE MRNA]</scope>
    <source>
        <tissue>Embryo</tissue>
    </source>
</reference>
<proteinExistence type="evidence at transcript level"/>
<organism>
    <name type="scientific">Xenopus laevis</name>
    <name type="common">African clawed frog</name>
    <dbReference type="NCBI Taxonomy" id="8355"/>
    <lineage>
        <taxon>Eukaryota</taxon>
        <taxon>Metazoa</taxon>
        <taxon>Chordata</taxon>
        <taxon>Craniata</taxon>
        <taxon>Vertebrata</taxon>
        <taxon>Euteleostomi</taxon>
        <taxon>Amphibia</taxon>
        <taxon>Batrachia</taxon>
        <taxon>Anura</taxon>
        <taxon>Pipoidea</taxon>
        <taxon>Pipidae</taxon>
        <taxon>Xenopodinae</taxon>
        <taxon>Xenopus</taxon>
        <taxon>Xenopus</taxon>
    </lineage>
</organism>
<keyword id="KW-0256">Endoplasmic reticulum</keyword>
<keyword id="KW-0472">Membrane</keyword>
<keyword id="KW-1185">Reference proteome</keyword>
<keyword id="KW-0812">Transmembrane</keyword>
<keyword id="KW-1133">Transmembrane helix</keyword>
<gene>
    <name type="primary">tmem203</name>
</gene>
<name>TM203_XENLA</name>